<reference key="1">
    <citation type="submission" date="2002-12" db="EMBL/GenBank/DDBJ databases">
        <title>Complete genome sequence of Vibrio vulnificus CMCP6.</title>
        <authorList>
            <person name="Rhee J.H."/>
            <person name="Kim S.Y."/>
            <person name="Chung S.S."/>
            <person name="Kim J.J."/>
            <person name="Moon Y.H."/>
            <person name="Jeong H."/>
            <person name="Choy H.E."/>
        </authorList>
    </citation>
    <scope>NUCLEOTIDE SEQUENCE [LARGE SCALE GENOMIC DNA]</scope>
    <source>
        <strain>CMCP6</strain>
    </source>
</reference>
<keyword id="KW-0004">4Fe-4S</keyword>
<keyword id="KW-0408">Iron</keyword>
<keyword id="KW-0411">Iron-sulfur</keyword>
<keyword id="KW-0479">Metal-binding</keyword>
<feature type="chain" id="PRO_0000209487" description="Fe/S biogenesis protein NfuA">
    <location>
        <begin position="1"/>
        <end position="194"/>
    </location>
</feature>
<feature type="binding site" evidence="1">
    <location>
        <position position="151"/>
    </location>
    <ligand>
        <name>[4Fe-4S] cluster</name>
        <dbReference type="ChEBI" id="CHEBI:49883"/>
    </ligand>
</feature>
<feature type="binding site" evidence="1">
    <location>
        <position position="154"/>
    </location>
    <ligand>
        <name>[4Fe-4S] cluster</name>
        <dbReference type="ChEBI" id="CHEBI:49883"/>
    </ligand>
</feature>
<protein>
    <recommendedName>
        <fullName evidence="1">Fe/S biogenesis protein NfuA</fullName>
    </recommendedName>
</protein>
<organism>
    <name type="scientific">Vibrio vulnificus (strain CMCP6)</name>
    <dbReference type="NCBI Taxonomy" id="216895"/>
    <lineage>
        <taxon>Bacteria</taxon>
        <taxon>Pseudomonadati</taxon>
        <taxon>Pseudomonadota</taxon>
        <taxon>Gammaproteobacteria</taxon>
        <taxon>Vibrionales</taxon>
        <taxon>Vibrionaceae</taxon>
        <taxon>Vibrio</taxon>
    </lineage>
</organism>
<accession>Q8DDU2</accession>
<dbReference type="EMBL" id="AE016795">
    <property type="protein sequence ID" value="AAO09367.1"/>
    <property type="status" value="ALT_INIT"/>
    <property type="molecule type" value="Genomic_DNA"/>
</dbReference>
<dbReference type="RefSeq" id="WP_026050270.1">
    <property type="nucleotide sequence ID" value="NC_004459.3"/>
</dbReference>
<dbReference type="SMR" id="Q8DDU2"/>
<dbReference type="GeneID" id="93895162"/>
<dbReference type="KEGG" id="vvu:VV1_0864"/>
<dbReference type="HOGENOM" id="CLU_094569_0_0_6"/>
<dbReference type="Proteomes" id="UP000002275">
    <property type="component" value="Chromosome 1"/>
</dbReference>
<dbReference type="GO" id="GO:0051539">
    <property type="term" value="F:4 iron, 4 sulfur cluster binding"/>
    <property type="evidence" value="ECO:0007669"/>
    <property type="project" value="UniProtKB-UniRule"/>
</dbReference>
<dbReference type="GO" id="GO:0005506">
    <property type="term" value="F:iron ion binding"/>
    <property type="evidence" value="ECO:0007669"/>
    <property type="project" value="InterPro"/>
</dbReference>
<dbReference type="GO" id="GO:0016226">
    <property type="term" value="P:iron-sulfur cluster assembly"/>
    <property type="evidence" value="ECO:0007669"/>
    <property type="project" value="UniProtKB-UniRule"/>
</dbReference>
<dbReference type="GO" id="GO:0051604">
    <property type="term" value="P:protein maturation"/>
    <property type="evidence" value="ECO:0007669"/>
    <property type="project" value="UniProtKB-UniRule"/>
</dbReference>
<dbReference type="Gene3D" id="3.30.300.130">
    <property type="entry name" value="Fe-S cluster assembly (FSCA)"/>
    <property type="match status" value="1"/>
</dbReference>
<dbReference type="Gene3D" id="2.60.300.12">
    <property type="entry name" value="HesB-like domain"/>
    <property type="match status" value="1"/>
</dbReference>
<dbReference type="HAMAP" id="MF_01637">
    <property type="entry name" value="Fe_S_biogen_NfuA"/>
    <property type="match status" value="1"/>
</dbReference>
<dbReference type="InterPro" id="IPR017726">
    <property type="entry name" value="Fe/S_biogenesis_protein_NfuA"/>
</dbReference>
<dbReference type="InterPro" id="IPR000361">
    <property type="entry name" value="FeS_biogenesis"/>
</dbReference>
<dbReference type="InterPro" id="IPR034904">
    <property type="entry name" value="FSCA_dom_sf"/>
</dbReference>
<dbReference type="InterPro" id="IPR035903">
    <property type="entry name" value="HesB-like_dom_sf"/>
</dbReference>
<dbReference type="InterPro" id="IPR001075">
    <property type="entry name" value="NIF_FeS_clus_asmbl_NifU_C"/>
</dbReference>
<dbReference type="NCBIfam" id="NF008392">
    <property type="entry name" value="PRK11190.1"/>
    <property type="match status" value="1"/>
</dbReference>
<dbReference type="NCBIfam" id="TIGR03341">
    <property type="entry name" value="YhgI_GntY"/>
    <property type="match status" value="1"/>
</dbReference>
<dbReference type="PANTHER" id="PTHR11178:SF51">
    <property type="entry name" value="FE_S BIOGENESIS PROTEIN NFUA"/>
    <property type="match status" value="1"/>
</dbReference>
<dbReference type="PANTHER" id="PTHR11178">
    <property type="entry name" value="IRON-SULFUR CLUSTER SCAFFOLD PROTEIN NFU-RELATED"/>
    <property type="match status" value="1"/>
</dbReference>
<dbReference type="Pfam" id="PF01521">
    <property type="entry name" value="Fe-S_biosyn"/>
    <property type="match status" value="1"/>
</dbReference>
<dbReference type="Pfam" id="PF01106">
    <property type="entry name" value="NifU"/>
    <property type="match status" value="1"/>
</dbReference>
<dbReference type="SUPFAM" id="SSF117916">
    <property type="entry name" value="Fe-S cluster assembly (FSCA) domain-like"/>
    <property type="match status" value="1"/>
</dbReference>
<dbReference type="SUPFAM" id="SSF89360">
    <property type="entry name" value="HesB-like domain"/>
    <property type="match status" value="1"/>
</dbReference>
<gene>
    <name evidence="1" type="primary">nfuA</name>
    <name type="ordered locus">VV1_0864</name>
</gene>
<sequence length="194" mass="20998">MSNITITEAAQTHFANLLGQQPDGTNIRVFVVNPGTQNAECGVSYCPPEAVEATDTEIPYQSFSAYVDELSLPFLEDAEIDYVTDKMGSQLTLKAPNAKMRKVADDAPLLERVEYAIQTQVNPQLAGHGGHVKLMEITDAGVAIVAFGGGCNGCSMVDVTLKEGIEKELLQQFSGELTAVRDATEHDRGDHSYY</sequence>
<comment type="function">
    <text evidence="1">Involved in iron-sulfur cluster biogenesis. Binds a 4Fe-4S cluster, can transfer this cluster to apoproteins, and thereby intervenes in the maturation of Fe/S proteins. Could also act as a scaffold/chaperone for damaged Fe/S proteins.</text>
</comment>
<comment type="cofactor">
    <cofactor evidence="1">
        <name>[4Fe-4S] cluster</name>
        <dbReference type="ChEBI" id="CHEBI:49883"/>
    </cofactor>
    <text evidence="1">Binds 1 [4Fe-4S] cluster per subunit. The cluster is presumably bound at the interface of two monomers.</text>
</comment>
<comment type="subunit">
    <text evidence="1">Homodimer.</text>
</comment>
<comment type="similarity">
    <text evidence="1">Belongs to the NfuA family.</text>
</comment>
<comment type="sequence caution" evidence="2">
    <conflict type="erroneous initiation">
        <sequence resource="EMBL-CDS" id="AAO09367"/>
    </conflict>
</comment>
<name>NFUA_VIBVU</name>
<evidence type="ECO:0000255" key="1">
    <source>
        <dbReference type="HAMAP-Rule" id="MF_01637"/>
    </source>
</evidence>
<evidence type="ECO:0000305" key="2"/>
<proteinExistence type="inferred from homology"/>